<organism>
    <name type="scientific">Caulobacter vibrioides (strain NA1000 / CB15N)</name>
    <name type="common">Caulobacter crescentus</name>
    <dbReference type="NCBI Taxonomy" id="565050"/>
    <lineage>
        <taxon>Bacteria</taxon>
        <taxon>Pseudomonadati</taxon>
        <taxon>Pseudomonadota</taxon>
        <taxon>Alphaproteobacteria</taxon>
        <taxon>Caulobacterales</taxon>
        <taxon>Caulobacteraceae</taxon>
        <taxon>Caulobacter</taxon>
    </lineage>
</organism>
<name>RNPH_CAUVN</name>
<gene>
    <name evidence="1" type="primary">rph</name>
    <name type="ordered locus">CCNA_00151</name>
</gene>
<accession>B8GXP2</accession>
<accession>P48196</accession>
<reference key="1">
    <citation type="journal article" date="1996" name="J. Bacteriol.">
        <title>Identification of a Caulobacter crescentus operon encoding hrcA, involved in negatively regulating heat-inducible transcription, and the chaperone gene grpE.</title>
        <authorList>
            <person name="Roberts R.C."/>
            <person name="Toochinda C."/>
            <person name="Avedissian M."/>
            <person name="Baldini R.L."/>
            <person name="Gomes S.L."/>
            <person name="Shapiro L."/>
        </authorList>
    </citation>
    <scope>NUCLEOTIDE SEQUENCE [GENOMIC DNA]</scope>
</reference>
<reference key="2">
    <citation type="journal article" date="2010" name="J. Bacteriol.">
        <title>The genetic basis of laboratory adaptation in Caulobacter crescentus.</title>
        <authorList>
            <person name="Marks M.E."/>
            <person name="Castro-Rojas C.M."/>
            <person name="Teiling C."/>
            <person name="Du L."/>
            <person name="Kapatral V."/>
            <person name="Walunas T.L."/>
            <person name="Crosson S."/>
        </authorList>
    </citation>
    <scope>NUCLEOTIDE SEQUENCE [LARGE SCALE GENOMIC DNA]</scope>
    <source>
        <strain>NA1000 / CB15N</strain>
    </source>
</reference>
<comment type="function">
    <text evidence="1">Phosphorolytic 3'-5' exoribonuclease that plays an important role in tRNA 3'-end maturation. Removes nucleotide residues following the 3'-CCA terminus of tRNAs; can also add nucleotides to the ends of RNA molecules by using nucleoside diphosphates as substrates, but this may not be physiologically important. Probably plays a role in initiation of 16S rRNA degradation (leading to ribosome degradation) during starvation.</text>
</comment>
<comment type="catalytic activity">
    <reaction evidence="1">
        <text>tRNA(n+1) + phosphate = tRNA(n) + a ribonucleoside 5'-diphosphate</text>
        <dbReference type="Rhea" id="RHEA:10628"/>
        <dbReference type="Rhea" id="RHEA-COMP:17343"/>
        <dbReference type="Rhea" id="RHEA-COMP:17344"/>
        <dbReference type="ChEBI" id="CHEBI:43474"/>
        <dbReference type="ChEBI" id="CHEBI:57930"/>
        <dbReference type="ChEBI" id="CHEBI:173114"/>
        <dbReference type="EC" id="2.7.7.56"/>
    </reaction>
</comment>
<comment type="subunit">
    <text evidence="1">Homohexameric ring arranged as a trimer of dimers.</text>
</comment>
<comment type="similarity">
    <text evidence="1">Belongs to the RNase PH family.</text>
</comment>
<dbReference type="EC" id="2.7.7.56" evidence="1"/>
<dbReference type="EMBL" id="U33324">
    <property type="protein sequence ID" value="AAB01514.1"/>
    <property type="molecule type" value="Genomic_DNA"/>
</dbReference>
<dbReference type="EMBL" id="CP001340">
    <property type="protein sequence ID" value="ACL93618.1"/>
    <property type="molecule type" value="Genomic_DNA"/>
</dbReference>
<dbReference type="RefSeq" id="WP_010918041.1">
    <property type="nucleotide sequence ID" value="NC_011916.1"/>
</dbReference>
<dbReference type="RefSeq" id="YP_002515526.1">
    <property type="nucleotide sequence ID" value="NC_011916.1"/>
</dbReference>
<dbReference type="SMR" id="B8GXP2"/>
<dbReference type="GeneID" id="7332405"/>
<dbReference type="KEGG" id="ccs:CCNA_00151"/>
<dbReference type="PATRIC" id="fig|565050.3.peg.150"/>
<dbReference type="HOGENOM" id="CLU_050858_0_0_5"/>
<dbReference type="OrthoDB" id="9802265at2"/>
<dbReference type="PhylomeDB" id="B8GXP2"/>
<dbReference type="Proteomes" id="UP000001364">
    <property type="component" value="Chromosome"/>
</dbReference>
<dbReference type="GO" id="GO:0000175">
    <property type="term" value="F:3'-5'-RNA exonuclease activity"/>
    <property type="evidence" value="ECO:0007669"/>
    <property type="project" value="UniProtKB-UniRule"/>
</dbReference>
<dbReference type="GO" id="GO:0000049">
    <property type="term" value="F:tRNA binding"/>
    <property type="evidence" value="ECO:0007669"/>
    <property type="project" value="UniProtKB-UniRule"/>
</dbReference>
<dbReference type="GO" id="GO:0009022">
    <property type="term" value="F:tRNA nucleotidyltransferase activity"/>
    <property type="evidence" value="ECO:0007669"/>
    <property type="project" value="UniProtKB-UniRule"/>
</dbReference>
<dbReference type="GO" id="GO:0016075">
    <property type="term" value="P:rRNA catabolic process"/>
    <property type="evidence" value="ECO:0007669"/>
    <property type="project" value="UniProtKB-UniRule"/>
</dbReference>
<dbReference type="GO" id="GO:0006364">
    <property type="term" value="P:rRNA processing"/>
    <property type="evidence" value="ECO:0007669"/>
    <property type="project" value="UniProtKB-KW"/>
</dbReference>
<dbReference type="GO" id="GO:0008033">
    <property type="term" value="P:tRNA processing"/>
    <property type="evidence" value="ECO:0007669"/>
    <property type="project" value="UniProtKB-UniRule"/>
</dbReference>
<dbReference type="CDD" id="cd11362">
    <property type="entry name" value="RNase_PH_bact"/>
    <property type="match status" value="1"/>
</dbReference>
<dbReference type="FunFam" id="3.30.230.70:FF:000003">
    <property type="entry name" value="Ribonuclease PH"/>
    <property type="match status" value="1"/>
</dbReference>
<dbReference type="Gene3D" id="3.30.230.70">
    <property type="entry name" value="GHMP Kinase, N-terminal domain"/>
    <property type="match status" value="1"/>
</dbReference>
<dbReference type="HAMAP" id="MF_00564">
    <property type="entry name" value="RNase_PH"/>
    <property type="match status" value="1"/>
</dbReference>
<dbReference type="InterPro" id="IPR001247">
    <property type="entry name" value="ExoRNase_PH_dom1"/>
</dbReference>
<dbReference type="InterPro" id="IPR015847">
    <property type="entry name" value="ExoRNase_PH_dom2"/>
</dbReference>
<dbReference type="InterPro" id="IPR036345">
    <property type="entry name" value="ExoRNase_PH_dom2_sf"/>
</dbReference>
<dbReference type="InterPro" id="IPR027408">
    <property type="entry name" value="PNPase/RNase_PH_dom_sf"/>
</dbReference>
<dbReference type="InterPro" id="IPR020568">
    <property type="entry name" value="Ribosomal_Su5_D2-typ_SF"/>
</dbReference>
<dbReference type="InterPro" id="IPR050080">
    <property type="entry name" value="RNase_PH"/>
</dbReference>
<dbReference type="InterPro" id="IPR002381">
    <property type="entry name" value="RNase_PH_bac-type"/>
</dbReference>
<dbReference type="InterPro" id="IPR018336">
    <property type="entry name" value="RNase_PH_CS"/>
</dbReference>
<dbReference type="NCBIfam" id="TIGR01966">
    <property type="entry name" value="RNasePH"/>
    <property type="match status" value="1"/>
</dbReference>
<dbReference type="PANTHER" id="PTHR11953">
    <property type="entry name" value="EXOSOME COMPLEX COMPONENT"/>
    <property type="match status" value="1"/>
</dbReference>
<dbReference type="PANTHER" id="PTHR11953:SF0">
    <property type="entry name" value="EXOSOME COMPLEX COMPONENT RRP41"/>
    <property type="match status" value="1"/>
</dbReference>
<dbReference type="Pfam" id="PF01138">
    <property type="entry name" value="RNase_PH"/>
    <property type="match status" value="1"/>
</dbReference>
<dbReference type="Pfam" id="PF03725">
    <property type="entry name" value="RNase_PH_C"/>
    <property type="match status" value="1"/>
</dbReference>
<dbReference type="SUPFAM" id="SSF55666">
    <property type="entry name" value="Ribonuclease PH domain 2-like"/>
    <property type="match status" value="1"/>
</dbReference>
<dbReference type="SUPFAM" id="SSF54211">
    <property type="entry name" value="Ribosomal protein S5 domain 2-like"/>
    <property type="match status" value="1"/>
</dbReference>
<dbReference type="PROSITE" id="PS01277">
    <property type="entry name" value="RIBONUCLEASE_PH"/>
    <property type="match status" value="1"/>
</dbReference>
<keyword id="KW-0548">Nucleotidyltransferase</keyword>
<keyword id="KW-1185">Reference proteome</keyword>
<keyword id="KW-0694">RNA-binding</keyword>
<keyword id="KW-0698">rRNA processing</keyword>
<keyword id="KW-0808">Transferase</keyword>
<keyword id="KW-0819">tRNA processing</keyword>
<keyword id="KW-0820">tRNA-binding</keyword>
<protein>
    <recommendedName>
        <fullName evidence="1">Ribonuclease PH</fullName>
        <shortName evidence="1">RNase PH</shortName>
        <ecNumber evidence="1">2.7.7.56</ecNumber>
    </recommendedName>
    <alternativeName>
        <fullName evidence="1">tRNA nucleotidyltransferase</fullName>
    </alternativeName>
</protein>
<feature type="chain" id="PRO_0000378308" description="Ribonuclease PH">
    <location>
        <begin position="1"/>
        <end position="238"/>
    </location>
</feature>
<feature type="binding site" evidence="1">
    <location>
        <position position="86"/>
    </location>
    <ligand>
        <name>phosphate</name>
        <dbReference type="ChEBI" id="CHEBI:43474"/>
        <note>substrate</note>
    </ligand>
</feature>
<feature type="binding site" evidence="1">
    <location>
        <begin position="124"/>
        <end position="126"/>
    </location>
    <ligand>
        <name>phosphate</name>
        <dbReference type="ChEBI" id="CHEBI:43474"/>
        <note>substrate</note>
    </ligand>
</feature>
<feature type="sequence conflict" description="In Ref. 1; AAB01514." evidence="2" ref="1">
    <original>EGSC</original>
    <variation>RAL</variation>
    <location>
        <begin position="25"/>
        <end position="28"/>
    </location>
</feature>
<feature type="sequence conflict" description="In Ref. 1; AAB01514." evidence="2" ref="1">
    <original>K</original>
    <variation>T</variation>
    <location>
        <position position="206"/>
    </location>
</feature>
<feature type="sequence conflict" description="In Ref. 1; AAB01514." evidence="2" ref="1">
    <original>LAEKGINELFALQRA</original>
    <variation>AGREGVQRTVRLLARL</variation>
    <location>
        <begin position="220"/>
        <end position="234"/>
    </location>
</feature>
<sequence length="238" mass="25549">MRPSERAPDQLRAVTLETGVNRYAEGSCLIGFGHTKVLVTATVEENVPGWMRNKGAGWVTAEYGMLPRATHTRGRREAAAGKQTGRTQEIQRLIGRSLRAVVDLKALGERQITLDCDVVQADGGTRTAAITGAWVALRLATKYLLDEGVLKTDPILGQVAAVSCGVFNGVPVLDLDYEEDSNAEADSNFVLTGVGDIVEIQATGEKRGFTRAEFESLYGLAEKGINELFALQRAAIGG</sequence>
<proteinExistence type="inferred from homology"/>
<evidence type="ECO:0000255" key="1">
    <source>
        <dbReference type="HAMAP-Rule" id="MF_00564"/>
    </source>
</evidence>
<evidence type="ECO:0000305" key="2"/>